<proteinExistence type="evidence at protein level"/>
<protein>
    <recommendedName>
        <fullName evidence="6">Protein IQ-DOMAIN 25</fullName>
        <shortName evidence="6">AtIQD25</shortName>
    </recommendedName>
</protein>
<dbReference type="EMBL" id="AL078470">
    <property type="protein sequence ID" value="CAB43929.1"/>
    <property type="status" value="ALT_INIT"/>
    <property type="molecule type" value="Genomic_DNA"/>
</dbReference>
<dbReference type="EMBL" id="AL161574">
    <property type="protein sequence ID" value="CAB79673.1"/>
    <property type="status" value="ALT_INIT"/>
    <property type="molecule type" value="Genomic_DNA"/>
</dbReference>
<dbReference type="EMBL" id="CP002687">
    <property type="protein sequence ID" value="AEE85592.1"/>
    <property type="molecule type" value="Genomic_DNA"/>
</dbReference>
<dbReference type="EMBL" id="BT003896">
    <property type="protein sequence ID" value="AAO41944.1"/>
    <property type="status" value="ALT_INIT"/>
    <property type="molecule type" value="mRNA"/>
</dbReference>
<dbReference type="PIR" id="T08970">
    <property type="entry name" value="T08970"/>
</dbReference>
<dbReference type="RefSeq" id="NP_194644.2">
    <property type="nucleotide sequence ID" value="NM_119059.4"/>
</dbReference>
<dbReference type="SMR" id="F4JMV6"/>
<dbReference type="STRING" id="3702.F4JMV6"/>
<dbReference type="iPTMnet" id="F4JMV6"/>
<dbReference type="PaxDb" id="3702-AT4G29150.1"/>
<dbReference type="ProteomicsDB" id="205853"/>
<dbReference type="EnsemblPlants" id="AT4G29150.1">
    <property type="protein sequence ID" value="AT4G29150.1"/>
    <property type="gene ID" value="AT4G29150"/>
</dbReference>
<dbReference type="GeneID" id="829036"/>
<dbReference type="Gramene" id="AT4G29150.1">
    <property type="protein sequence ID" value="AT4G29150.1"/>
    <property type="gene ID" value="AT4G29150"/>
</dbReference>
<dbReference type="KEGG" id="ath:AT4G29150"/>
<dbReference type="Araport" id="AT4G29150"/>
<dbReference type="TAIR" id="AT4G29150">
    <property type="gene designation" value="IQD25"/>
</dbReference>
<dbReference type="eggNOG" id="ENOG502QVYZ">
    <property type="taxonomic scope" value="Eukaryota"/>
</dbReference>
<dbReference type="HOGENOM" id="CLU_042730_3_0_1"/>
<dbReference type="InParanoid" id="F4JMV6"/>
<dbReference type="OMA" id="QIQCAFR"/>
<dbReference type="PRO" id="PR:F4JMV6"/>
<dbReference type="Proteomes" id="UP000006548">
    <property type="component" value="Chromosome 4"/>
</dbReference>
<dbReference type="ExpressionAtlas" id="F4JMV6">
    <property type="expression patterns" value="baseline and differential"/>
</dbReference>
<dbReference type="GO" id="GO:0005634">
    <property type="term" value="C:nucleus"/>
    <property type="evidence" value="ECO:0007669"/>
    <property type="project" value="UniProtKB-SubCell"/>
</dbReference>
<dbReference type="GO" id="GO:0005886">
    <property type="term" value="C:plasma membrane"/>
    <property type="evidence" value="ECO:0007669"/>
    <property type="project" value="UniProtKB-SubCell"/>
</dbReference>
<dbReference type="GO" id="GO:0005516">
    <property type="term" value="F:calmodulin binding"/>
    <property type="evidence" value="ECO:0007669"/>
    <property type="project" value="UniProtKB-KW"/>
</dbReference>
<dbReference type="CDD" id="cd23767">
    <property type="entry name" value="IQCD"/>
    <property type="match status" value="1"/>
</dbReference>
<dbReference type="Gene3D" id="1.20.5.190">
    <property type="match status" value="1"/>
</dbReference>
<dbReference type="InterPro" id="IPR025064">
    <property type="entry name" value="DUF4005"/>
</dbReference>
<dbReference type="InterPro" id="IPR000048">
    <property type="entry name" value="IQ_motif_EF-hand-BS"/>
</dbReference>
<dbReference type="InterPro" id="IPR027417">
    <property type="entry name" value="P-loop_NTPase"/>
</dbReference>
<dbReference type="PANTHER" id="PTHR32295">
    <property type="entry name" value="IQ-DOMAIN 5-RELATED"/>
    <property type="match status" value="1"/>
</dbReference>
<dbReference type="PANTHER" id="PTHR32295:SF10">
    <property type="entry name" value="PROTEIN IQ-DOMAIN 25"/>
    <property type="match status" value="1"/>
</dbReference>
<dbReference type="Pfam" id="PF13178">
    <property type="entry name" value="DUF4005"/>
    <property type="match status" value="1"/>
</dbReference>
<dbReference type="Pfam" id="PF00612">
    <property type="entry name" value="IQ"/>
    <property type="match status" value="2"/>
</dbReference>
<dbReference type="SMART" id="SM00015">
    <property type="entry name" value="IQ"/>
    <property type="match status" value="2"/>
</dbReference>
<dbReference type="SUPFAM" id="SSF52540">
    <property type="entry name" value="P-loop containing nucleoside triphosphate hydrolases"/>
    <property type="match status" value="1"/>
</dbReference>
<dbReference type="PROSITE" id="PS50096">
    <property type="entry name" value="IQ"/>
    <property type="match status" value="2"/>
</dbReference>
<sequence length="399" mass="43341">MRKNLTKLTRVKRETKMGRATRWFKGLFGIKPSSCSGTDSGTISNRLDRSLCDSYETIPPNISEKEAAWLRSFYAAGEEEKERRTHAIAVAAATAAAADAAVAAAKAAAAVVRLQGQGKSGPLGGGKSREHRAAMQIQCAFRGYLARKALRALRGVVKIQALVRGFLVRNQAAATLRSMEALVRAQKTVKIQRALRRNGNAAPARKSTERFSGSLENRNNGEETAKIVEVDTGTRPGTYRIRAPVLSGSDFLDNPFRRTLSSPLSGRVPPRLSMPKPEWEECSSKFPTAQSTPRFSGGSPARSVCCSGGGVEAEVDTEADANRFCFLSGEFNSGYMADTTSFRAKLRSHSAPRQRPESNASAGGWRRSIGGGGVRMQRQSCSGVREAVVGNIERRRMRW</sequence>
<accession>F4JMV6</accession>
<accession>Q9SZE3</accession>
<organism>
    <name type="scientific">Arabidopsis thaliana</name>
    <name type="common">Mouse-ear cress</name>
    <dbReference type="NCBI Taxonomy" id="3702"/>
    <lineage>
        <taxon>Eukaryota</taxon>
        <taxon>Viridiplantae</taxon>
        <taxon>Streptophyta</taxon>
        <taxon>Embryophyta</taxon>
        <taxon>Tracheophyta</taxon>
        <taxon>Spermatophyta</taxon>
        <taxon>Magnoliopsida</taxon>
        <taxon>eudicotyledons</taxon>
        <taxon>Gunneridae</taxon>
        <taxon>Pentapetalae</taxon>
        <taxon>rosids</taxon>
        <taxon>malvids</taxon>
        <taxon>Brassicales</taxon>
        <taxon>Brassicaceae</taxon>
        <taxon>Camelineae</taxon>
        <taxon>Arabidopsis</taxon>
    </lineage>
</organism>
<reference key="1">
    <citation type="journal article" date="1999" name="Nature">
        <title>Sequence and analysis of chromosome 4 of the plant Arabidopsis thaliana.</title>
        <authorList>
            <person name="Mayer K.F.X."/>
            <person name="Schueller C."/>
            <person name="Wambutt R."/>
            <person name="Murphy G."/>
            <person name="Volckaert G."/>
            <person name="Pohl T."/>
            <person name="Duesterhoeft A."/>
            <person name="Stiekema W."/>
            <person name="Entian K.-D."/>
            <person name="Terryn N."/>
            <person name="Harris B."/>
            <person name="Ansorge W."/>
            <person name="Brandt P."/>
            <person name="Grivell L.A."/>
            <person name="Rieger M."/>
            <person name="Weichselgartner M."/>
            <person name="de Simone V."/>
            <person name="Obermaier B."/>
            <person name="Mache R."/>
            <person name="Mueller M."/>
            <person name="Kreis M."/>
            <person name="Delseny M."/>
            <person name="Puigdomenech P."/>
            <person name="Watson M."/>
            <person name="Schmidtheini T."/>
            <person name="Reichert B."/>
            <person name="Portetelle D."/>
            <person name="Perez-Alonso M."/>
            <person name="Boutry M."/>
            <person name="Bancroft I."/>
            <person name="Vos P."/>
            <person name="Hoheisel J."/>
            <person name="Zimmermann W."/>
            <person name="Wedler H."/>
            <person name="Ridley P."/>
            <person name="Langham S.-A."/>
            <person name="McCullagh B."/>
            <person name="Bilham L."/>
            <person name="Robben J."/>
            <person name="van der Schueren J."/>
            <person name="Grymonprez B."/>
            <person name="Chuang Y.-J."/>
            <person name="Vandenbussche F."/>
            <person name="Braeken M."/>
            <person name="Weltjens I."/>
            <person name="Voet M."/>
            <person name="Bastiaens I."/>
            <person name="Aert R."/>
            <person name="Defoor E."/>
            <person name="Weitzenegger T."/>
            <person name="Bothe G."/>
            <person name="Ramsperger U."/>
            <person name="Hilbert H."/>
            <person name="Braun M."/>
            <person name="Holzer E."/>
            <person name="Brandt A."/>
            <person name="Peters S."/>
            <person name="van Staveren M."/>
            <person name="Dirkse W."/>
            <person name="Mooijman P."/>
            <person name="Klein Lankhorst R."/>
            <person name="Rose M."/>
            <person name="Hauf J."/>
            <person name="Koetter P."/>
            <person name="Berneiser S."/>
            <person name="Hempel S."/>
            <person name="Feldpausch M."/>
            <person name="Lamberth S."/>
            <person name="Van den Daele H."/>
            <person name="De Keyser A."/>
            <person name="Buysshaert C."/>
            <person name="Gielen J."/>
            <person name="Villarroel R."/>
            <person name="De Clercq R."/>
            <person name="van Montagu M."/>
            <person name="Rogers J."/>
            <person name="Cronin A."/>
            <person name="Quail M.A."/>
            <person name="Bray-Allen S."/>
            <person name="Clark L."/>
            <person name="Doggett J."/>
            <person name="Hall S."/>
            <person name="Kay M."/>
            <person name="Lennard N."/>
            <person name="McLay K."/>
            <person name="Mayes R."/>
            <person name="Pettett A."/>
            <person name="Rajandream M.A."/>
            <person name="Lyne M."/>
            <person name="Benes V."/>
            <person name="Rechmann S."/>
            <person name="Borkova D."/>
            <person name="Bloecker H."/>
            <person name="Scharfe M."/>
            <person name="Grimm M."/>
            <person name="Loehnert T.-H."/>
            <person name="Dose S."/>
            <person name="de Haan M."/>
            <person name="Maarse A.C."/>
            <person name="Schaefer M."/>
            <person name="Mueller-Auer S."/>
            <person name="Gabel C."/>
            <person name="Fuchs M."/>
            <person name="Fartmann B."/>
            <person name="Granderath K."/>
            <person name="Dauner D."/>
            <person name="Herzl A."/>
            <person name="Neumann S."/>
            <person name="Argiriou A."/>
            <person name="Vitale D."/>
            <person name="Liguori R."/>
            <person name="Piravandi E."/>
            <person name="Massenet O."/>
            <person name="Quigley F."/>
            <person name="Clabauld G."/>
            <person name="Muendlein A."/>
            <person name="Felber R."/>
            <person name="Schnabl S."/>
            <person name="Hiller R."/>
            <person name="Schmidt W."/>
            <person name="Lecharny A."/>
            <person name="Aubourg S."/>
            <person name="Chefdor F."/>
            <person name="Cooke R."/>
            <person name="Berger C."/>
            <person name="Monfort A."/>
            <person name="Casacuberta E."/>
            <person name="Gibbons T."/>
            <person name="Weber N."/>
            <person name="Vandenbol M."/>
            <person name="Bargues M."/>
            <person name="Terol J."/>
            <person name="Torres A."/>
            <person name="Perez-Perez A."/>
            <person name="Purnelle B."/>
            <person name="Bent E."/>
            <person name="Johnson S."/>
            <person name="Tacon D."/>
            <person name="Jesse T."/>
            <person name="Heijnen L."/>
            <person name="Schwarz S."/>
            <person name="Scholler P."/>
            <person name="Heber S."/>
            <person name="Francs P."/>
            <person name="Bielke C."/>
            <person name="Frishman D."/>
            <person name="Haase D."/>
            <person name="Lemcke K."/>
            <person name="Mewes H.-W."/>
            <person name="Stocker S."/>
            <person name="Zaccaria P."/>
            <person name="Bevan M."/>
            <person name="Wilson R.K."/>
            <person name="de la Bastide M."/>
            <person name="Habermann K."/>
            <person name="Parnell L."/>
            <person name="Dedhia N."/>
            <person name="Gnoj L."/>
            <person name="Schutz K."/>
            <person name="Huang E."/>
            <person name="Spiegel L."/>
            <person name="Sekhon M."/>
            <person name="Murray J."/>
            <person name="Sheet P."/>
            <person name="Cordes M."/>
            <person name="Abu-Threideh J."/>
            <person name="Stoneking T."/>
            <person name="Kalicki J."/>
            <person name="Graves T."/>
            <person name="Harmon G."/>
            <person name="Edwards J."/>
            <person name="Latreille P."/>
            <person name="Courtney L."/>
            <person name="Cloud J."/>
            <person name="Abbott A."/>
            <person name="Scott K."/>
            <person name="Johnson D."/>
            <person name="Minx P."/>
            <person name="Bentley D."/>
            <person name="Fulton B."/>
            <person name="Miller N."/>
            <person name="Greco T."/>
            <person name="Kemp K."/>
            <person name="Kramer J."/>
            <person name="Fulton L."/>
            <person name="Mardis E."/>
            <person name="Dante M."/>
            <person name="Pepin K."/>
            <person name="Hillier L.W."/>
            <person name="Nelson J."/>
            <person name="Spieth J."/>
            <person name="Ryan E."/>
            <person name="Andrews S."/>
            <person name="Geisel C."/>
            <person name="Layman D."/>
            <person name="Du H."/>
            <person name="Ali J."/>
            <person name="Berghoff A."/>
            <person name="Jones K."/>
            <person name="Drone K."/>
            <person name="Cotton M."/>
            <person name="Joshu C."/>
            <person name="Antonoiu B."/>
            <person name="Zidanic M."/>
            <person name="Strong C."/>
            <person name="Sun H."/>
            <person name="Lamar B."/>
            <person name="Yordan C."/>
            <person name="Ma P."/>
            <person name="Zhong J."/>
            <person name="Preston R."/>
            <person name="Vil D."/>
            <person name="Shekher M."/>
            <person name="Matero A."/>
            <person name="Shah R."/>
            <person name="Swaby I.K."/>
            <person name="O'Shaughnessy A."/>
            <person name="Rodriguez M."/>
            <person name="Hoffman J."/>
            <person name="Till S."/>
            <person name="Granat S."/>
            <person name="Shohdy N."/>
            <person name="Hasegawa A."/>
            <person name="Hameed A."/>
            <person name="Lodhi M."/>
            <person name="Johnson A."/>
            <person name="Chen E."/>
            <person name="Marra M.A."/>
            <person name="Martienssen R."/>
            <person name="McCombie W.R."/>
        </authorList>
    </citation>
    <scope>NUCLEOTIDE SEQUENCE [LARGE SCALE GENOMIC DNA]</scope>
    <source>
        <strain>cv. Columbia</strain>
    </source>
</reference>
<reference key="2">
    <citation type="journal article" date="2017" name="Plant J.">
        <title>Araport11: a complete reannotation of the Arabidopsis thaliana reference genome.</title>
        <authorList>
            <person name="Cheng C.Y."/>
            <person name="Krishnakumar V."/>
            <person name="Chan A.P."/>
            <person name="Thibaud-Nissen F."/>
            <person name="Schobel S."/>
            <person name="Town C.D."/>
        </authorList>
    </citation>
    <scope>GENOME REANNOTATION</scope>
    <source>
        <strain>cv. Columbia</strain>
    </source>
</reference>
<reference key="3">
    <citation type="journal article" date="2003" name="Science">
        <title>Empirical analysis of transcriptional activity in the Arabidopsis genome.</title>
        <authorList>
            <person name="Yamada K."/>
            <person name="Lim J."/>
            <person name="Dale J.M."/>
            <person name="Chen H."/>
            <person name="Shinn P."/>
            <person name="Palm C.J."/>
            <person name="Southwick A.M."/>
            <person name="Wu H.C."/>
            <person name="Kim C.J."/>
            <person name="Nguyen M."/>
            <person name="Pham P.K."/>
            <person name="Cheuk R.F."/>
            <person name="Karlin-Newmann G."/>
            <person name="Liu S.X."/>
            <person name="Lam B."/>
            <person name="Sakano H."/>
            <person name="Wu T."/>
            <person name="Yu G."/>
            <person name="Miranda M."/>
            <person name="Quach H.L."/>
            <person name="Tripp M."/>
            <person name="Chang C.H."/>
            <person name="Lee J.M."/>
            <person name="Toriumi M.J."/>
            <person name="Chan M.M."/>
            <person name="Tang C.C."/>
            <person name="Onodera C.S."/>
            <person name="Deng J.M."/>
            <person name="Akiyama K."/>
            <person name="Ansari Y."/>
            <person name="Arakawa T."/>
            <person name="Banh J."/>
            <person name="Banno F."/>
            <person name="Bowser L."/>
            <person name="Brooks S.Y."/>
            <person name="Carninci P."/>
            <person name="Chao Q."/>
            <person name="Choy N."/>
            <person name="Enju A."/>
            <person name="Goldsmith A.D."/>
            <person name="Gurjal M."/>
            <person name="Hansen N.F."/>
            <person name="Hayashizaki Y."/>
            <person name="Johnson-Hopson C."/>
            <person name="Hsuan V.W."/>
            <person name="Iida K."/>
            <person name="Karnes M."/>
            <person name="Khan S."/>
            <person name="Koesema E."/>
            <person name="Ishida J."/>
            <person name="Jiang P.X."/>
            <person name="Jones T."/>
            <person name="Kawai J."/>
            <person name="Kamiya A."/>
            <person name="Meyers C."/>
            <person name="Nakajima M."/>
            <person name="Narusaka M."/>
            <person name="Seki M."/>
            <person name="Sakurai T."/>
            <person name="Satou M."/>
            <person name="Tamse R."/>
            <person name="Vaysberg M."/>
            <person name="Wallender E.K."/>
            <person name="Wong C."/>
            <person name="Yamamura Y."/>
            <person name="Yuan S."/>
            <person name="Shinozaki K."/>
            <person name="Davis R.W."/>
            <person name="Theologis A."/>
            <person name="Ecker J.R."/>
        </authorList>
    </citation>
    <scope>NUCLEOTIDE SEQUENCE [LARGE SCALE MRNA] OF 2-399</scope>
    <source>
        <strain>cv. Columbia</strain>
    </source>
</reference>
<reference key="4">
    <citation type="journal article" date="2005" name="BMC Evol. Biol.">
        <title>Genome-wide comparative analysis of the IQD gene families in Arabidopsis thaliana and Oryza sativa.</title>
        <authorList>
            <person name="Abel S."/>
            <person name="Savchenko T."/>
            <person name="Levy M."/>
        </authorList>
    </citation>
    <scope>INTERACTION WITH CALMODULIN</scope>
    <scope>GENE FAMILY</scope>
    <scope>NOMENCLATURE</scope>
    <source>
        <strain>cv. Columbia</strain>
    </source>
</reference>
<reference key="5">
    <citation type="journal article" date="2017" name="Plant Physiol.">
        <title>The IQD family of calmodulin-binding proteins links calcium signaling to microtubules, membrane subdomains, and the nucleus.</title>
        <authorList>
            <person name="Buerstenbinder K."/>
            <person name="Moeller B."/>
            <person name="Ploetner R."/>
            <person name="Stamm G."/>
            <person name="Hause G."/>
            <person name="Mitra D."/>
            <person name="Abel S."/>
        </authorList>
    </citation>
    <scope>SUBCELLULAR LOCATION</scope>
    <scope>INTERACTION WITH CALMODULIN</scope>
    <source>
        <strain>cv. Columbia</strain>
    </source>
</reference>
<reference key="6">
    <citation type="journal article" date="2017" name="Plant Signal. Behav.">
        <title>Functions of IQD proteins as hubs in cellular calcium and auxin signaling: A toolbox for shape formation and tissue-specification in plants?</title>
        <authorList>
            <person name="Buerstenbinder K."/>
            <person name="Mitra D."/>
            <person name="Quegwer J."/>
        </authorList>
    </citation>
    <scope>REVIEW</scope>
</reference>
<evidence type="ECO:0000250" key="1">
    <source>
        <dbReference type="UniProtKB" id="Q9SF32"/>
    </source>
</evidence>
<evidence type="ECO:0000255" key="2">
    <source>
        <dbReference type="PROSITE-ProRule" id="PRU00116"/>
    </source>
</evidence>
<evidence type="ECO:0000255" key="3">
    <source>
        <dbReference type="PROSITE-ProRule" id="PRU00768"/>
    </source>
</evidence>
<evidence type="ECO:0000256" key="4">
    <source>
        <dbReference type="SAM" id="MobiDB-lite"/>
    </source>
</evidence>
<evidence type="ECO:0000269" key="5">
    <source>
    </source>
</evidence>
<evidence type="ECO:0000303" key="6">
    <source>
    </source>
</evidence>
<evidence type="ECO:0000305" key="7"/>
<evidence type="ECO:0000312" key="8">
    <source>
        <dbReference type="Araport" id="AT4G29150"/>
    </source>
</evidence>
<evidence type="ECO:0000312" key="9">
    <source>
        <dbReference type="EMBL" id="CAB43929.1"/>
    </source>
</evidence>
<name>IQD25_ARATH</name>
<gene>
    <name evidence="6" type="primary">IQD25</name>
    <name evidence="8" type="ordered locus">At4g29150</name>
    <name evidence="9" type="ORF">F19B15.180</name>
</gene>
<feature type="chain" id="PRO_0000453130" description="Protein IQ-DOMAIN 25">
    <location>
        <begin position="1"/>
        <end position="399"/>
    </location>
</feature>
<feature type="domain" description="IQ 1" evidence="2">
    <location>
        <begin position="130"/>
        <end position="158"/>
    </location>
</feature>
<feature type="domain" description="IQ 2" evidence="2">
    <location>
        <begin position="159"/>
        <end position="181"/>
    </location>
</feature>
<feature type="region of interest" description="Calmodulin-binding" evidence="6">
    <location>
        <begin position="81"/>
        <end position="91"/>
    </location>
</feature>
<feature type="region of interest" description="Calmodulin-binding" evidence="6">
    <location>
        <begin position="99"/>
        <end position="110"/>
    </location>
</feature>
<feature type="region of interest" description="Disordered" evidence="4">
    <location>
        <begin position="198"/>
        <end position="219"/>
    </location>
</feature>
<feature type="region of interest" description="Disordered" evidence="4">
    <location>
        <begin position="262"/>
        <end position="302"/>
    </location>
</feature>
<feature type="region of interest" description="Disordered" evidence="4">
    <location>
        <begin position="346"/>
        <end position="377"/>
    </location>
</feature>
<feature type="short sequence motif" description="Nuclear localization signal" evidence="3">
    <location>
        <begin position="1"/>
        <end position="8"/>
    </location>
</feature>
<feature type="compositionally biased region" description="Polar residues" evidence="4">
    <location>
        <begin position="285"/>
        <end position="294"/>
    </location>
</feature>
<comment type="function">
    <text evidence="1">May be involved in cooperative interactions with calmodulins or calmodulin-like proteins (By similarity). Recruits calmodulin proteins to microtubules, thus being a potential scaffold in cellular signaling and trafficking (By similarity). May associate with nucleic acids and regulate gene expression at the transcriptional or post-transcriptional level (By similarity).</text>
</comment>
<comment type="subunit">
    <text evidence="1">Binds to multiple calmodulin (CaM) in the presence of Ca(2+) and CaM-like proteins.</text>
</comment>
<comment type="subcellular location">
    <subcellularLocation>
        <location evidence="3">Nucleus</location>
    </subcellularLocation>
    <subcellularLocation>
        <location evidence="5">Cell membrane</location>
    </subcellularLocation>
    <text evidence="5">Recruits calmodulin (CaM2) at plasma membrane subdomains.</text>
</comment>
<comment type="similarity">
    <text evidence="7">Belongs to the IQD family.</text>
</comment>
<comment type="sequence caution" evidence="7">
    <conflict type="erroneous initiation">
        <sequence resource="EMBL-CDS" id="AAO41944"/>
    </conflict>
    <text>Truncated N-terminus.</text>
</comment>
<comment type="sequence caution" evidence="7">
    <conflict type="erroneous initiation">
        <sequence resource="EMBL-CDS" id="CAB43929"/>
    </conflict>
    <text>Truncated N-terminus.</text>
</comment>
<comment type="sequence caution" evidence="7">
    <conflict type="erroneous initiation">
        <sequence resource="EMBL-CDS" id="CAB79673"/>
    </conflict>
    <text>Truncated N-terminus.</text>
</comment>
<keyword id="KW-0112">Calmodulin-binding</keyword>
<keyword id="KW-1003">Cell membrane</keyword>
<keyword id="KW-0472">Membrane</keyword>
<keyword id="KW-0539">Nucleus</keyword>
<keyword id="KW-1185">Reference proteome</keyword>
<keyword id="KW-0677">Repeat</keyword>